<gene>
    <name type="primary">SMU1</name>
    <name type="ORF">RCJMB04_2e22</name>
</gene>
<sequence length="513" mass="57498">MSIEIESSDVIRLIMQYLKENSLHRALATLQEETTVSLNTVDSIESFVADINSGHWDTVLQAIQSLKLPDKTLIDLYEQVVLELIELRELGAARSLLRQTDPMIMLKQTQPERYIHLENLLARSYFDPREAYPDGSSKEKRRAAIAQALAGEVSVVPPSRLMALLGQALKWQQHQGLLPPGMTIDLFRGKAAVKDVEEEKFPTQLSRHIKFGQKSHVECARFSPDGQYLVTGSVDGFIEVWNFTTGKIRKDLKYQAQDNFMMMDDAVLCMCFSRDTEMLATGAQDGKIKVWKIQSGQCLRRFERAHSKGVTCLSFSKDSSQILSASFDQTIRIHGLKSGKTLKEFRGHSSFVNEATFTQDGHYIISASSDGTVKVWNVKTTECSNTFKSLGSTAGTDITVNSVILLPKNPEHFVVCNRSNTVVIMNMQGQIVRSFSSGKREGGDFVCCALSPRGEWIYCVGEDFVLYCFSTVTGKLERTLTVHEKDVIGIAHHPHQNLIATYSEDGLLKLWKP</sequence>
<reference key="1">
    <citation type="journal article" date="2005" name="Genome Biol.">
        <title>Full-length cDNAs from chicken bursal lymphocytes to facilitate gene function analysis.</title>
        <authorList>
            <person name="Caldwell R.B."/>
            <person name="Kierzek A.M."/>
            <person name="Arakawa H."/>
            <person name="Bezzubov Y."/>
            <person name="Zaim J."/>
            <person name="Fiedler P."/>
            <person name="Kutter S."/>
            <person name="Blagodatski A."/>
            <person name="Kostovska D."/>
            <person name="Koter M."/>
            <person name="Plachy J."/>
            <person name="Carninci P."/>
            <person name="Hayashizaki Y."/>
            <person name="Buerstedde J.-M."/>
        </authorList>
    </citation>
    <scope>NUCLEOTIDE SEQUENCE [LARGE SCALE MRNA]</scope>
    <source>
        <strain>CB</strain>
        <tissue>Bursa of Fabricius</tissue>
    </source>
</reference>
<protein>
    <recommendedName>
        <fullName>WD40 repeat-containing protein SMU1</fullName>
    </recommendedName>
    <alternativeName>
        <fullName>Smu-1 suppressor of mec-8 and unc-52 protein homolog</fullName>
    </alternativeName>
</protein>
<evidence type="ECO:0000250" key="1">
    <source>
        <dbReference type="UniProtKB" id="G5EEG7"/>
    </source>
</evidence>
<evidence type="ECO:0000250" key="2">
    <source>
        <dbReference type="UniProtKB" id="Q2TAY7"/>
    </source>
</evidence>
<evidence type="ECO:0000250" key="3">
    <source>
        <dbReference type="UniProtKB" id="Q76B40"/>
    </source>
</evidence>
<evidence type="ECO:0000250" key="4">
    <source>
        <dbReference type="UniProtKB" id="Q99M63"/>
    </source>
</evidence>
<evidence type="ECO:0000255" key="5"/>
<evidence type="ECO:0000255" key="6">
    <source>
        <dbReference type="PROSITE-ProRule" id="PRU00058"/>
    </source>
</evidence>
<evidence type="ECO:0000255" key="7">
    <source>
        <dbReference type="PROSITE-ProRule" id="PRU00126"/>
    </source>
</evidence>
<evidence type="ECO:0000305" key="8"/>
<organism>
    <name type="scientific">Gallus gallus</name>
    <name type="common">Chicken</name>
    <dbReference type="NCBI Taxonomy" id="9031"/>
    <lineage>
        <taxon>Eukaryota</taxon>
        <taxon>Metazoa</taxon>
        <taxon>Chordata</taxon>
        <taxon>Craniata</taxon>
        <taxon>Vertebrata</taxon>
        <taxon>Euteleostomi</taxon>
        <taxon>Archelosauria</taxon>
        <taxon>Archosauria</taxon>
        <taxon>Dinosauria</taxon>
        <taxon>Saurischia</taxon>
        <taxon>Theropoda</taxon>
        <taxon>Coelurosauria</taxon>
        <taxon>Aves</taxon>
        <taxon>Neognathae</taxon>
        <taxon>Galloanserae</taxon>
        <taxon>Galliformes</taxon>
        <taxon>Phasianidae</taxon>
        <taxon>Phasianinae</taxon>
        <taxon>Gallus</taxon>
    </lineage>
</organism>
<proteinExistence type="evidence at transcript level"/>
<dbReference type="EMBL" id="AJ719436">
    <property type="protein sequence ID" value="CAG31095.1"/>
    <property type="molecule type" value="mRNA"/>
</dbReference>
<dbReference type="RefSeq" id="NP_001007980.1">
    <property type="nucleotide sequence ID" value="NM_001007979.2"/>
</dbReference>
<dbReference type="SMR" id="Q5ZME8"/>
<dbReference type="FunCoup" id="Q5ZME8">
    <property type="interactions" value="3427"/>
</dbReference>
<dbReference type="STRING" id="9031.ENSGALP00000003130"/>
<dbReference type="PaxDb" id="9031-ENSGALP00000003130"/>
<dbReference type="Ensembl" id="ENSGALT00010019447.1">
    <property type="protein sequence ID" value="ENSGALP00010010995.1"/>
    <property type="gene ID" value="ENSGALG00010008153.1"/>
</dbReference>
<dbReference type="GeneID" id="427377"/>
<dbReference type="KEGG" id="gga:427377"/>
<dbReference type="CTD" id="55234"/>
<dbReference type="VEuPathDB" id="HostDB:geneid_427377"/>
<dbReference type="eggNOG" id="KOG0275">
    <property type="taxonomic scope" value="Eukaryota"/>
</dbReference>
<dbReference type="GeneTree" id="ENSGT00940000155007"/>
<dbReference type="HOGENOM" id="CLU_000288_57_38_1"/>
<dbReference type="InParanoid" id="Q5ZME8"/>
<dbReference type="OMA" id="MMKQQEP"/>
<dbReference type="OrthoDB" id="538223at2759"/>
<dbReference type="PhylomeDB" id="Q5ZME8"/>
<dbReference type="TreeFam" id="TF313969"/>
<dbReference type="PRO" id="PR:Q5ZME8"/>
<dbReference type="Proteomes" id="UP000000539">
    <property type="component" value="Chromosome Z"/>
</dbReference>
<dbReference type="Bgee" id="ENSGALG00000002014">
    <property type="expression patterns" value="Expressed in spleen and 13 other cell types or tissues"/>
</dbReference>
<dbReference type="GO" id="GO:0005737">
    <property type="term" value="C:cytoplasm"/>
    <property type="evidence" value="ECO:0007669"/>
    <property type="project" value="UniProtKB-SubCell"/>
</dbReference>
<dbReference type="GO" id="GO:0016607">
    <property type="term" value="C:nuclear speck"/>
    <property type="evidence" value="ECO:0000250"/>
    <property type="project" value="UniProtKB"/>
</dbReference>
<dbReference type="GO" id="GO:0005634">
    <property type="term" value="C:nucleus"/>
    <property type="evidence" value="ECO:0000250"/>
    <property type="project" value="UniProtKB"/>
</dbReference>
<dbReference type="GO" id="GO:0071011">
    <property type="term" value="C:precatalytic spliceosome"/>
    <property type="evidence" value="ECO:0000318"/>
    <property type="project" value="GO_Central"/>
</dbReference>
<dbReference type="GO" id="GO:0071005">
    <property type="term" value="C:U2-type precatalytic spliceosome"/>
    <property type="evidence" value="ECO:0000250"/>
    <property type="project" value="UniProtKB"/>
</dbReference>
<dbReference type="GO" id="GO:0000398">
    <property type="term" value="P:mRNA splicing, via spliceosome"/>
    <property type="evidence" value="ECO:0000250"/>
    <property type="project" value="UniProtKB"/>
</dbReference>
<dbReference type="GO" id="GO:0000381">
    <property type="term" value="P:regulation of alternative mRNA splicing, via spliceosome"/>
    <property type="evidence" value="ECO:0000250"/>
    <property type="project" value="UniProtKB"/>
</dbReference>
<dbReference type="GO" id="GO:0008380">
    <property type="term" value="P:RNA splicing"/>
    <property type="evidence" value="ECO:0000318"/>
    <property type="project" value="GO_Central"/>
</dbReference>
<dbReference type="CDD" id="cd00200">
    <property type="entry name" value="WD40"/>
    <property type="match status" value="1"/>
</dbReference>
<dbReference type="FunFam" id="2.130.10.10:FF:000729">
    <property type="entry name" value="SMU1, DNA replication regulator and spliceosomal factor"/>
    <property type="match status" value="1"/>
</dbReference>
<dbReference type="FunFam" id="2.130.10.10:FF:000754">
    <property type="entry name" value="SMU1, DNA replication regulator and spliceosomal factor"/>
    <property type="match status" value="1"/>
</dbReference>
<dbReference type="FunFam" id="2.130.10.10:FF:000082">
    <property type="entry name" value="WD40 repeat-containing protein SMU1"/>
    <property type="match status" value="1"/>
</dbReference>
<dbReference type="Gene3D" id="2.130.10.10">
    <property type="entry name" value="YVTN repeat-like/Quinoprotein amine dehydrogenase"/>
    <property type="match status" value="3"/>
</dbReference>
<dbReference type="InterPro" id="IPR006595">
    <property type="entry name" value="CTLH_C"/>
</dbReference>
<dbReference type="InterPro" id="IPR020472">
    <property type="entry name" value="G-protein_beta_WD-40_rep"/>
</dbReference>
<dbReference type="InterPro" id="IPR006594">
    <property type="entry name" value="LisH"/>
</dbReference>
<dbReference type="InterPro" id="IPR045184">
    <property type="entry name" value="SMU1"/>
</dbReference>
<dbReference type="InterPro" id="IPR054532">
    <property type="entry name" value="TPL_SMU1_LisH-like"/>
</dbReference>
<dbReference type="InterPro" id="IPR015943">
    <property type="entry name" value="WD40/YVTN_repeat-like_dom_sf"/>
</dbReference>
<dbReference type="InterPro" id="IPR019775">
    <property type="entry name" value="WD40_repeat_CS"/>
</dbReference>
<dbReference type="InterPro" id="IPR036322">
    <property type="entry name" value="WD40_repeat_dom_sf"/>
</dbReference>
<dbReference type="InterPro" id="IPR001680">
    <property type="entry name" value="WD40_rpt"/>
</dbReference>
<dbReference type="PANTHER" id="PTHR22848">
    <property type="entry name" value="WD40 REPEAT PROTEIN"/>
    <property type="match status" value="1"/>
</dbReference>
<dbReference type="Pfam" id="PF17814">
    <property type="entry name" value="LisH_TPL"/>
    <property type="match status" value="1"/>
</dbReference>
<dbReference type="Pfam" id="PF00400">
    <property type="entry name" value="WD40"/>
    <property type="match status" value="5"/>
</dbReference>
<dbReference type="PRINTS" id="PR00320">
    <property type="entry name" value="GPROTEINBRPT"/>
</dbReference>
<dbReference type="SMART" id="SM00668">
    <property type="entry name" value="CTLH"/>
    <property type="match status" value="1"/>
</dbReference>
<dbReference type="SMART" id="SM00667">
    <property type="entry name" value="LisH"/>
    <property type="match status" value="1"/>
</dbReference>
<dbReference type="SMART" id="SM00320">
    <property type="entry name" value="WD40"/>
    <property type="match status" value="7"/>
</dbReference>
<dbReference type="SUPFAM" id="SSF50978">
    <property type="entry name" value="WD40 repeat-like"/>
    <property type="match status" value="1"/>
</dbReference>
<dbReference type="PROSITE" id="PS50897">
    <property type="entry name" value="CTLH"/>
    <property type="match status" value="1"/>
</dbReference>
<dbReference type="PROSITE" id="PS50896">
    <property type="entry name" value="LISH"/>
    <property type="match status" value="1"/>
</dbReference>
<dbReference type="PROSITE" id="PS00678">
    <property type="entry name" value="WD_REPEATS_1"/>
    <property type="match status" value="2"/>
</dbReference>
<dbReference type="PROSITE" id="PS50082">
    <property type="entry name" value="WD_REPEATS_2"/>
    <property type="match status" value="5"/>
</dbReference>
<dbReference type="PROSITE" id="PS50294">
    <property type="entry name" value="WD_REPEATS_REGION"/>
    <property type="match status" value="1"/>
</dbReference>
<accession>Q5ZME8</accession>
<comment type="function">
    <text evidence="2 3">Involved in pre-mRNA splicing as a component of the spliceosome (By similarity). Regulates alternative splicing of the HSPG2 pre-mRNA (By similarity). Required for normal accumulation of IK (By similarity). Required for normal mitotic spindle assembly and normal progress through mitosis (By similarity).</text>
</comment>
<comment type="subunit">
    <text evidence="2">Component of the spliceosome B complex. Interacts with IK.</text>
</comment>
<comment type="subcellular location">
    <subcellularLocation>
        <location evidence="4">Cytoplasm</location>
    </subcellularLocation>
    <subcellularLocation>
        <location evidence="3">Nucleus</location>
    </subcellularLocation>
    <subcellularLocation>
        <location evidence="3">Nucleus speckle</location>
    </subcellularLocation>
    <text evidence="3">Colocalizes with SRSF1 in nuclear speckles.</text>
</comment>
<comment type="domain">
    <text evidence="1">The WD repeats assemble into a seven-bladed WD propeller.</text>
</comment>
<comment type="similarity">
    <text evidence="8">Belongs to the WD repeat SMU1 family.</text>
</comment>
<keyword id="KW-0963">Cytoplasm</keyword>
<keyword id="KW-0507">mRNA processing</keyword>
<keyword id="KW-0508">mRNA splicing</keyword>
<keyword id="KW-0539">Nucleus</keyword>
<keyword id="KW-1185">Reference proteome</keyword>
<keyword id="KW-0677">Repeat</keyword>
<keyword id="KW-0747">Spliceosome</keyword>
<keyword id="KW-0853">WD repeat</keyword>
<feature type="chain" id="PRO_0000237593" description="WD40 repeat-containing protein SMU1">
    <location>
        <begin position="1"/>
        <end position="513"/>
    </location>
</feature>
<feature type="domain" description="LisH" evidence="7">
    <location>
        <begin position="6"/>
        <end position="38"/>
    </location>
</feature>
<feature type="domain" description="CTLH" evidence="6">
    <location>
        <begin position="40"/>
        <end position="92"/>
    </location>
</feature>
<feature type="repeat" description="WD 1" evidence="5">
    <location>
        <begin position="212"/>
        <end position="253"/>
    </location>
</feature>
<feature type="repeat" description="WD 2" evidence="5">
    <location>
        <begin position="262"/>
        <end position="303"/>
    </location>
</feature>
<feature type="repeat" description="WD 3" evidence="5">
    <location>
        <begin position="305"/>
        <end position="346"/>
    </location>
</feature>
<feature type="repeat" description="WD 4" evidence="5">
    <location>
        <begin position="347"/>
        <end position="386"/>
    </location>
</feature>
<feature type="repeat" description="WD 5" evidence="5">
    <location>
        <begin position="395"/>
        <end position="436"/>
    </location>
</feature>
<feature type="repeat" description="WD 6" evidence="5">
    <location>
        <begin position="440"/>
        <end position="479"/>
    </location>
</feature>
<feature type="repeat" description="WD 7" evidence="5">
    <location>
        <begin position="482"/>
        <end position="513"/>
    </location>
</feature>
<feature type="region of interest" description="Required for interaction with IK" evidence="2">
    <location>
        <begin position="1"/>
        <end position="315"/>
    </location>
</feature>
<name>SMU1_CHICK</name>